<organism>
    <name type="scientific">Homo sapiens</name>
    <name type="common">Human</name>
    <dbReference type="NCBI Taxonomy" id="9606"/>
    <lineage>
        <taxon>Eukaryota</taxon>
        <taxon>Metazoa</taxon>
        <taxon>Chordata</taxon>
        <taxon>Craniata</taxon>
        <taxon>Vertebrata</taxon>
        <taxon>Euteleostomi</taxon>
        <taxon>Mammalia</taxon>
        <taxon>Eutheria</taxon>
        <taxon>Euarchontoglires</taxon>
        <taxon>Primates</taxon>
        <taxon>Haplorrhini</taxon>
        <taxon>Catarrhini</taxon>
        <taxon>Hominidae</taxon>
        <taxon>Homo</taxon>
    </lineage>
</organism>
<keyword id="KW-0002">3D-structure</keyword>
<keyword id="KW-0025">Alternative splicing</keyword>
<keyword id="KW-0067">ATP-binding</keyword>
<keyword id="KW-0963">Cytoplasm</keyword>
<keyword id="KW-0418">Kinase</keyword>
<keyword id="KW-0460">Magnesium</keyword>
<keyword id="KW-0479">Metal-binding</keyword>
<keyword id="KW-0547">Nucleotide-binding</keyword>
<keyword id="KW-0597">Phosphoprotein</keyword>
<keyword id="KW-1267">Proteomics identification</keyword>
<keyword id="KW-1185">Reference proteome</keyword>
<keyword id="KW-0723">Serine/threonine-protein kinase</keyword>
<keyword id="KW-0808">Transferase</keyword>
<sequence>MGEKVSEAPEPVPRGCSGHGSRTPASALVAASSPGASSAESSSGSETLSEEGEPGGFSREHQPPPPPPLGGTLGARAPAAWAPASVLLERGVLALPPPLPGGAVPPAPRGSSASQEEQDEELDHILSPPPMPFRKCSNPDVASGPGKSLKYKRQLSEDGRQLRRGSLGGALTGRYLLPNPVAGQAWPASAETSNLVRMRSQALGQSAPSLTASLKELSLPRRGSFCRTSNRKSLIGNGQSPALPRPHSPLSAHAGNSPQDSPRNFSPSASAHFSFARRTDGRRWSLASLPSSGYGTNTPSSTVSSSCSSQEKLHQLPYQPTPDELHFLSKHFCTTESIATENRCRNTPMRPRSRSLSPGRSPACCDHEIIMMNHVYKERFPKATAQMEERLKEIITSYSPDNVLPLADGVLSFTHHQIIELARDCLDKSHQGLITSRYFLELQHKLDKLLQEAHDRSESGELAFIKQLVRKILIVIARPARLLECLEFDPEEFYYLLEAAEGHAKEGQGIKTDIPRYIISQLGLNKDPLEEMAHLGNYDSGTAETPETDESVSSSNASLKLRRKPRESDFETIKLISNGAYGAVYFVRHKESRQRFAMKKINKQNLILRNQIQQAFVERDILTFAENPFVVSMYCSFETRRHLCMVMEYVEGGDCATLMKNMGPLPVDMARMYFAETVLALEYLHNYGIVHRDLKPDNLLVTSMGHIKLTDFGLSKVGLMSMTTNLYEGHIEKDAREFLDKQVCGTPEYIAPEVILRQGYGKPVDWWAMGIILYEFLVGCVPFFGDTPEELFGQVISDEINWPEKDEAPPPDAQDLITLLLRQNPLERLGTGGAYEVKQHRFFRSLDWNSLLRQKAEFIPQLESEDDTSYFDTRSEKYHHMETEEEDDTNDEDFNVEIRQFSSCSHRFSKVFSSIDRITQNSAEEKEDSVDKTKSTTLPSTETLSWSSEYSEMQQLSTSNSSDTESNRHKLSSGLLPKLAISTEGEQDEAASCPGDPHEEPGKPALPPEECAQEEPEVTTPASTISSSTLSVGSFSEHLDQINGRSECVDSTDNSSKPSSEPASHMARQRLESTEKKKISGKVTKSLSASALSLMIPGDMFAVSPLGSPMSPHSLSSDPSSSRDSSPSRDSSAASASPHQPIVIHSSGKNYGFTIRAIRVYVGDSDIYTVHHIVWNVEEGSPACQAGLKAGDLITHINGEPVHGLVHTEVIELLLKSGNKVSITTTPFENTSIKTGPARRNSYKSRMVRRSKKSKKKESLERRRSLFKKLAKQPSPLLHTSRSFSCLNRSLSSGESLPGSPTHSLSPRSPTPSYRSTPDFPSGTNSSQSSSPSSSAPNSPAGSGHIRPSTLHGLAPKLGGQRYRSGRRKSAGNIPLSPLARTPSPTPQPTSPQRSPSPLLGHSLGNSKIAQAFPSKMHSPPTIVRHIVRPKSAEPPRSPLLKRVQSEEKLSPSYGSDKKHLCSRKHSLEVTQEEVQREQSQREAPLQSLDENVCDVPPLSRARPVEQGCLKRPVSRKVGRQESVDDLDRDKLKAKVVVKKADGFPEKQESHQKSHGPGSDLENFALFKLEEREKKVYPKAVERSSTFENKASMQEAPPLGSLLKDALHKQASVRASEGAMSDGRVPAEHRQGGGDFRRAPAPGTLQDGLCHSLDRGISGKGEGTEKSSQAKELLRCEKLDSKLANIDYLRKKMSLEDKEDNLCPVLKPKMTAGSHECLPGNPVRPTGGQQEPPPASESRAFVSSTHAAQMSAVSFVPLKALTGRVDSGTEKPGLVAPESPVRKSPSEYKLEGRSVSCLKPIEGTLDIALLSGPQASKTELPSPESAQSPSPSGDVRASVPPVLPSSSGKKNDTTSARELSPSSLKMNKSYLLEPWFLPPSRGLQNSPAVSLPDPEFKRDRKGPHPTARSPGTVMESNPQQREGSSPKHQDHTTDPKLLTCLGQNLHSPDLARPRCPLPPEASPSREKPGLRESSERGPPTARSERSAARADTCREPSMELCFPETAKTSDNSKNLLSVGRTHPDFYTQTQAMEKAWAPGGKTNHKDGPGEARPPPRDNSSLHSAGIPCEKELGKVRRGVEPKPEALLARRSLQPPGIESEKSEKLSSFPSLQKDGAKEPERKEQPLQRHPSSIPPPPLTAKDLSSPAARQHCSSPSHASGREPGAKPSTAEPSSSPQDPPKPVAAHSESSSHKPRPGPDPGPPKTKHPDRSLSSQKPSVGATKGKEPATQSLGGSSREGKGHSKSGPDVFPATPGSQNKASDGIGQGEGGPSVPLHTDRAPLDAKPQPTSGGRPLEVLEKPVHLPRPGHPGPSEPADQKLSAVGEKQTLSPKHPKPSTVKDCPTLCKQTDNRQTDKSPSQPAANTDRRAEGKKCTEALYAPAEGDKLEAGLSFVHSENRLKGAERPAAGVGKGFPEARGKGPGPQKPPTEADKPNGMKRSPSATGQSSFRSTALPEKSLSCSSSFPETRAGVREASAASSDTSSAKAAGGMLELPAPSNRDHRKAQPAGEGRTHMTKSDSLPSFRVSTLPLESHHPDPNTMGGASHRDRALSVTATVGETKGKDPAPAQPPPARKQNVGRDVTKPSPAPNTDRPISLSNEKDFVVRQRRGKESLRSSPHKKAL</sequence>
<evidence type="ECO:0000250" key="1"/>
<evidence type="ECO:0000250" key="2">
    <source>
        <dbReference type="UniProtKB" id="Q811L6"/>
    </source>
</evidence>
<evidence type="ECO:0000255" key="3">
    <source>
        <dbReference type="PROSITE-ProRule" id="PRU00143"/>
    </source>
</evidence>
<evidence type="ECO:0000255" key="4">
    <source>
        <dbReference type="PROSITE-ProRule" id="PRU00159"/>
    </source>
</evidence>
<evidence type="ECO:0000255" key="5">
    <source>
        <dbReference type="PROSITE-ProRule" id="PRU00618"/>
    </source>
</evidence>
<evidence type="ECO:0000256" key="6">
    <source>
        <dbReference type="SAM" id="MobiDB-lite"/>
    </source>
</evidence>
<evidence type="ECO:0000269" key="7">
    <source>
    </source>
</evidence>
<evidence type="ECO:0000269" key="8">
    <source>
    </source>
</evidence>
<evidence type="ECO:0000303" key="9">
    <source>
    </source>
</evidence>
<evidence type="ECO:0000303" key="10">
    <source>
    </source>
</evidence>
<evidence type="ECO:0000303" key="11">
    <source>
    </source>
</evidence>
<evidence type="ECO:0000303" key="12">
    <source>
    </source>
</evidence>
<evidence type="ECO:0000305" key="13"/>
<evidence type="ECO:0000312" key="14">
    <source>
        <dbReference type="HGNC" id="HGNC:19037"/>
    </source>
</evidence>
<evidence type="ECO:0007744" key="15">
    <source>
    </source>
</evidence>
<evidence type="ECO:0007744" key="16">
    <source>
    </source>
</evidence>
<evidence type="ECO:0007829" key="17">
    <source>
        <dbReference type="PDB" id="2W7R"/>
    </source>
</evidence>
<proteinExistence type="evidence at protein level"/>
<reference key="1">
    <citation type="journal article" date="2006" name="Mol. Biol. (Mosk.)">
        <title>Identification of a novel human MAST4 gene, a new member of the microtubule associated serine-threonine kinase family.</title>
        <authorList>
            <person name="Sun L."/>
            <person name="Gu S."/>
            <person name="Li X."/>
            <person name="Sun Y."/>
            <person name="Zheng D."/>
            <person name="Yu K."/>
            <person name="Ji C."/>
            <person name="Tang R."/>
            <person name="Xie Y."/>
            <person name="Mao Y."/>
        </authorList>
    </citation>
    <scope>NUCLEOTIDE SEQUENCE [MRNA] (ISOFORM 3)</scope>
    <scope>TISSUE SPECIFICITY</scope>
</reference>
<reference key="2">
    <citation type="journal article" date="2004" name="Nature">
        <title>The DNA sequence and comparative analysis of human chromosome 5.</title>
        <authorList>
            <person name="Schmutz J."/>
            <person name="Martin J."/>
            <person name="Terry A."/>
            <person name="Couronne O."/>
            <person name="Grimwood J."/>
            <person name="Lowry S."/>
            <person name="Gordon L.A."/>
            <person name="Scott D."/>
            <person name="Xie G."/>
            <person name="Huang W."/>
            <person name="Hellsten U."/>
            <person name="Tran-Gyamfi M."/>
            <person name="She X."/>
            <person name="Prabhakar S."/>
            <person name="Aerts A."/>
            <person name="Altherr M."/>
            <person name="Bajorek E."/>
            <person name="Black S."/>
            <person name="Branscomb E."/>
            <person name="Caoile C."/>
            <person name="Challacombe J.F."/>
            <person name="Chan Y.M."/>
            <person name="Denys M."/>
            <person name="Detter J.C."/>
            <person name="Escobar J."/>
            <person name="Flowers D."/>
            <person name="Fotopulos D."/>
            <person name="Glavina T."/>
            <person name="Gomez M."/>
            <person name="Gonzales E."/>
            <person name="Goodstein D."/>
            <person name="Grigoriev I."/>
            <person name="Groza M."/>
            <person name="Hammon N."/>
            <person name="Hawkins T."/>
            <person name="Haydu L."/>
            <person name="Israni S."/>
            <person name="Jett J."/>
            <person name="Kadner K."/>
            <person name="Kimball H."/>
            <person name="Kobayashi A."/>
            <person name="Lopez F."/>
            <person name="Lou Y."/>
            <person name="Martinez D."/>
            <person name="Medina C."/>
            <person name="Morgan J."/>
            <person name="Nandkeshwar R."/>
            <person name="Noonan J.P."/>
            <person name="Pitluck S."/>
            <person name="Pollard M."/>
            <person name="Predki P."/>
            <person name="Priest J."/>
            <person name="Ramirez L."/>
            <person name="Retterer J."/>
            <person name="Rodriguez A."/>
            <person name="Rogers S."/>
            <person name="Salamov A."/>
            <person name="Salazar A."/>
            <person name="Thayer N."/>
            <person name="Tice H."/>
            <person name="Tsai M."/>
            <person name="Ustaszewska A."/>
            <person name="Vo N."/>
            <person name="Wheeler J."/>
            <person name="Wu K."/>
            <person name="Yang J."/>
            <person name="Dickson M."/>
            <person name="Cheng J.-F."/>
            <person name="Eichler E.E."/>
            <person name="Olsen A."/>
            <person name="Pennacchio L.A."/>
            <person name="Rokhsar D.S."/>
            <person name="Richardson P."/>
            <person name="Lucas S.M."/>
            <person name="Myers R.M."/>
            <person name="Rubin E.M."/>
        </authorList>
    </citation>
    <scope>NUCLEOTIDE SEQUENCE [LARGE SCALE GENOMIC DNA]</scope>
</reference>
<reference key="3">
    <citation type="journal article" date="2004" name="Genome Res.">
        <title>The status, quality, and expansion of the NIH full-length cDNA project: the Mammalian Gene Collection (MGC).</title>
        <authorList>
            <consortium name="The MGC Project Team"/>
        </authorList>
    </citation>
    <scope>NUCLEOTIDE SEQUENCE [LARGE SCALE MRNA] (ISOFORM 4)</scope>
    <source>
        <tissue>Lung</tissue>
    </source>
</reference>
<reference key="4">
    <citation type="journal article" date="2004" name="Nat. Genet.">
        <title>Complete sequencing and characterization of 21,243 full-length human cDNAs.</title>
        <authorList>
            <person name="Ota T."/>
            <person name="Suzuki Y."/>
            <person name="Nishikawa T."/>
            <person name="Otsuki T."/>
            <person name="Sugiyama T."/>
            <person name="Irie R."/>
            <person name="Wakamatsu A."/>
            <person name="Hayashi K."/>
            <person name="Sato H."/>
            <person name="Nagai K."/>
            <person name="Kimura K."/>
            <person name="Makita H."/>
            <person name="Sekine M."/>
            <person name="Obayashi M."/>
            <person name="Nishi T."/>
            <person name="Shibahara T."/>
            <person name="Tanaka T."/>
            <person name="Ishii S."/>
            <person name="Yamamoto J."/>
            <person name="Saito K."/>
            <person name="Kawai Y."/>
            <person name="Isono Y."/>
            <person name="Nakamura Y."/>
            <person name="Nagahari K."/>
            <person name="Murakami K."/>
            <person name="Yasuda T."/>
            <person name="Iwayanagi T."/>
            <person name="Wagatsuma M."/>
            <person name="Shiratori A."/>
            <person name="Sudo H."/>
            <person name="Hosoiri T."/>
            <person name="Kaku Y."/>
            <person name="Kodaira H."/>
            <person name="Kondo H."/>
            <person name="Sugawara M."/>
            <person name="Takahashi M."/>
            <person name="Kanda K."/>
            <person name="Yokoi T."/>
            <person name="Furuya T."/>
            <person name="Kikkawa E."/>
            <person name="Omura Y."/>
            <person name="Abe K."/>
            <person name="Kamihara K."/>
            <person name="Katsuta N."/>
            <person name="Sato K."/>
            <person name="Tanikawa M."/>
            <person name="Yamazaki M."/>
            <person name="Ninomiya K."/>
            <person name="Ishibashi T."/>
            <person name="Yamashita H."/>
            <person name="Murakawa K."/>
            <person name="Fujimori K."/>
            <person name="Tanai H."/>
            <person name="Kimata M."/>
            <person name="Watanabe M."/>
            <person name="Hiraoka S."/>
            <person name="Chiba Y."/>
            <person name="Ishida S."/>
            <person name="Ono Y."/>
            <person name="Takiguchi S."/>
            <person name="Watanabe S."/>
            <person name="Yosida M."/>
            <person name="Hotuta T."/>
            <person name="Kusano J."/>
            <person name="Kanehori K."/>
            <person name="Takahashi-Fujii A."/>
            <person name="Hara H."/>
            <person name="Tanase T.-O."/>
            <person name="Nomura Y."/>
            <person name="Togiya S."/>
            <person name="Komai F."/>
            <person name="Hara R."/>
            <person name="Takeuchi K."/>
            <person name="Arita M."/>
            <person name="Imose N."/>
            <person name="Musashino K."/>
            <person name="Yuuki H."/>
            <person name="Oshima A."/>
            <person name="Sasaki N."/>
            <person name="Aotsuka S."/>
            <person name="Yoshikawa Y."/>
            <person name="Matsunawa H."/>
            <person name="Ichihara T."/>
            <person name="Shiohata N."/>
            <person name="Sano S."/>
            <person name="Moriya S."/>
            <person name="Momiyama H."/>
            <person name="Satoh N."/>
            <person name="Takami S."/>
            <person name="Terashima Y."/>
            <person name="Suzuki O."/>
            <person name="Nakagawa S."/>
            <person name="Senoh A."/>
            <person name="Mizoguchi H."/>
            <person name="Goto Y."/>
            <person name="Shimizu F."/>
            <person name="Wakebe H."/>
            <person name="Hishigaki H."/>
            <person name="Watanabe T."/>
            <person name="Sugiyama A."/>
            <person name="Takemoto M."/>
            <person name="Kawakami B."/>
            <person name="Yamazaki M."/>
            <person name="Watanabe K."/>
            <person name="Kumagai A."/>
            <person name="Itakura S."/>
            <person name="Fukuzumi Y."/>
            <person name="Fujimori Y."/>
            <person name="Komiyama M."/>
            <person name="Tashiro H."/>
            <person name="Tanigami A."/>
            <person name="Fujiwara T."/>
            <person name="Ono T."/>
            <person name="Yamada K."/>
            <person name="Fujii Y."/>
            <person name="Ozaki K."/>
            <person name="Hirao M."/>
            <person name="Ohmori Y."/>
            <person name="Kawabata A."/>
            <person name="Hikiji T."/>
            <person name="Kobatake N."/>
            <person name="Inagaki H."/>
            <person name="Ikema Y."/>
            <person name="Okamoto S."/>
            <person name="Okitani R."/>
            <person name="Kawakami T."/>
            <person name="Noguchi S."/>
            <person name="Itoh T."/>
            <person name="Shigeta K."/>
            <person name="Senba T."/>
            <person name="Matsumura K."/>
            <person name="Nakajima Y."/>
            <person name="Mizuno T."/>
            <person name="Morinaga M."/>
            <person name="Sasaki M."/>
            <person name="Togashi T."/>
            <person name="Oyama M."/>
            <person name="Hata H."/>
            <person name="Watanabe M."/>
            <person name="Komatsu T."/>
            <person name="Mizushima-Sugano J."/>
            <person name="Satoh T."/>
            <person name="Shirai Y."/>
            <person name="Takahashi Y."/>
            <person name="Nakagawa K."/>
            <person name="Okumura K."/>
            <person name="Nagase T."/>
            <person name="Nomura N."/>
            <person name="Kikuchi H."/>
            <person name="Masuho Y."/>
            <person name="Yamashita R."/>
            <person name="Nakai K."/>
            <person name="Yada T."/>
            <person name="Nakamura Y."/>
            <person name="Ohara O."/>
            <person name="Isogai T."/>
            <person name="Sugano S."/>
        </authorList>
    </citation>
    <scope>NUCLEOTIDE SEQUENCE [LARGE SCALE MRNA] OF 1-1074 (ISOFORM 5)</scope>
    <scope>NUCLEOTIDE SEQUENCE [LARGE SCALE MRNA] OF 1-678 (ISOFORM 2)</scope>
    <source>
        <tissue>Brain</tissue>
        <tissue>Thymus</tissue>
    </source>
</reference>
<reference key="5">
    <citation type="journal article" date="1997" name="DNA Res.">
        <title>Prediction of the coding sequences of unidentified human genes. VII. The complete sequences of 100 new cDNA clones from brain which can code for large proteins in vitro.</title>
        <authorList>
            <person name="Nagase T."/>
            <person name="Ishikawa K."/>
            <person name="Nakajima D."/>
            <person name="Ohira M."/>
            <person name="Seki N."/>
            <person name="Miyajima N."/>
            <person name="Tanaka A."/>
            <person name="Kotani H."/>
            <person name="Nomura N."/>
            <person name="Ohara O."/>
        </authorList>
    </citation>
    <scope>NUCLEOTIDE SEQUENCE [LARGE SCALE MRNA] OF 487-2623 (ISOFORM 1)</scope>
    <source>
        <tissue>Brain</tissue>
    </source>
</reference>
<reference key="6">
    <citation type="journal article" date="2012" name="Proc. Natl. Acad. Sci. U.S.A.">
        <title>N-terminal acetylome analyses and functional insights of the N-terminal acetyltransferase NatB.</title>
        <authorList>
            <person name="Van Damme P."/>
            <person name="Lasa M."/>
            <person name="Polevoda B."/>
            <person name="Gazquez C."/>
            <person name="Elosegui-Artola A."/>
            <person name="Kim D.S."/>
            <person name="De Juan-Pardo E."/>
            <person name="Demeyer K."/>
            <person name="Hole K."/>
            <person name="Larrea E."/>
            <person name="Timmerman E."/>
            <person name="Prieto J."/>
            <person name="Arnesen T."/>
            <person name="Sherman F."/>
            <person name="Gevaert K."/>
            <person name="Aldabe R."/>
        </authorList>
    </citation>
    <scope>IDENTIFICATION BY MASS SPECTROMETRY [LARGE SCALE ANALYSIS]</scope>
</reference>
<reference key="7">
    <citation type="journal article" date="2013" name="J. Proteome Res.">
        <title>Toward a comprehensive characterization of a human cancer cell phosphoproteome.</title>
        <authorList>
            <person name="Zhou H."/>
            <person name="Di Palma S."/>
            <person name="Preisinger C."/>
            <person name="Peng M."/>
            <person name="Polat A.N."/>
            <person name="Heck A.J."/>
            <person name="Mohammed S."/>
        </authorList>
    </citation>
    <scope>PHOSPHORYLATION [LARGE SCALE ANALYSIS] AT SER-270; SER-914; SER-1370; SER-1384; SER-1419; SER-1467; SER-1523; SER-1779; SER-1822; SER-1909; SER-2442; SER-2520 AND SER-2552</scope>
    <scope>IDENTIFICATION BY MASS SPECTROMETRY [LARGE SCALE ANALYSIS]</scope>
    <source>
        <tissue>Erythroleukemia</tissue>
    </source>
</reference>
<reference key="8">
    <citation type="journal article" date="2014" name="J. Proteomics">
        <title>An enzyme assisted RP-RPLC approach for in-depth analysis of human liver phosphoproteome.</title>
        <authorList>
            <person name="Bian Y."/>
            <person name="Song C."/>
            <person name="Cheng K."/>
            <person name="Dong M."/>
            <person name="Wang F."/>
            <person name="Huang J."/>
            <person name="Sun D."/>
            <person name="Wang L."/>
            <person name="Ye M."/>
            <person name="Zou H."/>
        </authorList>
    </citation>
    <scope>PHOSPHORYLATION [LARGE SCALE ANALYSIS] AT SER-1370; SER-1779 AND SER-2520</scope>
    <scope>IDENTIFICATION BY MASS SPECTROMETRY [LARGE SCALE ANALYSIS]</scope>
    <source>
        <tissue>Liver</tissue>
    </source>
</reference>
<reference key="9">
    <citation type="submission" date="2009-05" db="PDB data bank">
        <title>Structure of the Pdz domain of human Microtubule Associated Serine-Threonine Kinase 4.</title>
        <authorList>
            <consortium name="Structural genomics consortium (SGC)"/>
        </authorList>
    </citation>
    <scope>X-RAY CRYSTALLOGRAPHY (1.60 ANGSTROMS) OF 1140-1231</scope>
</reference>
<reference key="10">
    <citation type="journal article" date="2007" name="Nature">
        <title>Patterns of somatic mutation in human cancer genomes.</title>
        <authorList>
            <person name="Greenman C."/>
            <person name="Stephens P."/>
            <person name="Smith R."/>
            <person name="Dalgliesh G.L."/>
            <person name="Hunter C."/>
            <person name="Bignell G."/>
            <person name="Davies H."/>
            <person name="Teague J."/>
            <person name="Butler A."/>
            <person name="Stevens C."/>
            <person name="Edkins S."/>
            <person name="O'Meara S."/>
            <person name="Vastrik I."/>
            <person name="Schmidt E.E."/>
            <person name="Avis T."/>
            <person name="Barthorpe S."/>
            <person name="Bhamra G."/>
            <person name="Buck G."/>
            <person name="Choudhury B."/>
            <person name="Clements J."/>
            <person name="Cole J."/>
            <person name="Dicks E."/>
            <person name="Forbes S."/>
            <person name="Gray K."/>
            <person name="Halliday K."/>
            <person name="Harrison R."/>
            <person name="Hills K."/>
            <person name="Hinton J."/>
            <person name="Jenkinson A."/>
            <person name="Jones D."/>
            <person name="Menzies A."/>
            <person name="Mironenko T."/>
            <person name="Perry J."/>
            <person name="Raine K."/>
            <person name="Richardson D."/>
            <person name="Shepherd R."/>
            <person name="Small A."/>
            <person name="Tofts C."/>
            <person name="Varian J."/>
            <person name="Webb T."/>
            <person name="West S."/>
            <person name="Widaa S."/>
            <person name="Yates A."/>
            <person name="Cahill D.P."/>
            <person name="Louis D.N."/>
            <person name="Goldstraw P."/>
            <person name="Nicholson A.G."/>
            <person name="Brasseur F."/>
            <person name="Looijenga L."/>
            <person name="Weber B.L."/>
            <person name="Chiew Y.-E."/>
            <person name="DeFazio A."/>
            <person name="Greaves M.F."/>
            <person name="Green A.R."/>
            <person name="Campbell P."/>
            <person name="Birney E."/>
            <person name="Easton D.F."/>
            <person name="Chenevix-Trench G."/>
            <person name="Tan M.-H."/>
            <person name="Khoo S.K."/>
            <person name="Teh B.T."/>
            <person name="Yuen S.T."/>
            <person name="Leung S.Y."/>
            <person name="Wooster R."/>
            <person name="Futreal P.A."/>
            <person name="Stratton M.R."/>
        </authorList>
    </citation>
    <scope>VARIANTS [LARGE SCALE ANALYSIS] ARG-920; TRP-1954; LEU-2198; CYS-2290 AND ASP-2467</scope>
</reference>
<name>MAST4_HUMAN</name>
<protein>
    <recommendedName>
        <fullName evidence="13">Microtubule-associated serine/threonine-protein kinase 4</fullName>
        <ecNumber evidence="4">2.7.11.1</ecNumber>
    </recommendedName>
</protein>
<gene>
    <name evidence="14" type="primary">MAST4</name>
    <name evidence="12" type="synonym">KIAA0303</name>
</gene>
<dbReference type="EC" id="2.7.11.1" evidence="4"/>
<dbReference type="EMBL" id="AY830839">
    <property type="protein sequence ID" value="AAW52510.1"/>
    <property type="molecule type" value="mRNA"/>
</dbReference>
<dbReference type="EMBL" id="AC008872">
    <property type="status" value="NOT_ANNOTATED_CDS"/>
    <property type="molecule type" value="Genomic_DNA"/>
</dbReference>
<dbReference type="EMBL" id="AC008920">
    <property type="status" value="NOT_ANNOTATED_CDS"/>
    <property type="molecule type" value="Genomic_DNA"/>
</dbReference>
<dbReference type="EMBL" id="AC016634">
    <property type="status" value="NOT_ANNOTATED_CDS"/>
    <property type="molecule type" value="Genomic_DNA"/>
</dbReference>
<dbReference type="EMBL" id="AC034208">
    <property type="status" value="NOT_ANNOTATED_CDS"/>
    <property type="molecule type" value="Genomic_DNA"/>
</dbReference>
<dbReference type="EMBL" id="AC044799">
    <property type="status" value="NOT_ANNOTATED_CDS"/>
    <property type="molecule type" value="Genomic_DNA"/>
</dbReference>
<dbReference type="EMBL" id="AC092349">
    <property type="status" value="NOT_ANNOTATED_CDS"/>
    <property type="molecule type" value="Genomic_DNA"/>
</dbReference>
<dbReference type="EMBL" id="AC092373">
    <property type="status" value="NOT_ANNOTATED_CDS"/>
    <property type="molecule type" value="Genomic_DNA"/>
</dbReference>
<dbReference type="EMBL" id="AC113365">
    <property type="status" value="NOT_ANNOTATED_CDS"/>
    <property type="molecule type" value="Genomic_DNA"/>
</dbReference>
<dbReference type="EMBL" id="KC877001">
    <property type="status" value="NOT_ANNOTATED_CDS"/>
    <property type="molecule type" value="Genomic_DNA"/>
</dbReference>
<dbReference type="EMBL" id="KC877010">
    <property type="status" value="NOT_ANNOTATED_CDS"/>
    <property type="molecule type" value="Genomic_DNA"/>
</dbReference>
<dbReference type="EMBL" id="BC033215">
    <property type="protein sequence ID" value="AAH33215.1"/>
    <property type="molecule type" value="mRNA"/>
</dbReference>
<dbReference type="EMBL" id="AK057601">
    <property type="protein sequence ID" value="BAB71532.1"/>
    <property type="molecule type" value="mRNA"/>
</dbReference>
<dbReference type="EMBL" id="AK131421">
    <property type="status" value="NOT_ANNOTATED_CDS"/>
    <property type="molecule type" value="mRNA"/>
</dbReference>
<dbReference type="EMBL" id="AB002301">
    <property type="protein sequence ID" value="BAA20762.1"/>
    <property type="molecule type" value="mRNA"/>
</dbReference>
<dbReference type="CCDS" id="CCDS47224.1">
    <molecule id="O15021-4"/>
</dbReference>
<dbReference type="CCDS" id="CCDS47225.1">
    <molecule id="O15021-3"/>
</dbReference>
<dbReference type="CCDS" id="CCDS54861.1">
    <molecule id="O15021-5"/>
</dbReference>
<dbReference type="CCDS" id="CCDS75254.1">
    <molecule id="O15021-2"/>
</dbReference>
<dbReference type="RefSeq" id="NP_001158136.1">
    <molecule id="O15021-5"/>
    <property type="nucleotide sequence ID" value="NM_001164664.2"/>
</dbReference>
<dbReference type="RefSeq" id="NP_001277155.1">
    <property type="nucleotide sequence ID" value="NM_001290226.1"/>
</dbReference>
<dbReference type="RefSeq" id="NP_001277157.1">
    <property type="nucleotide sequence ID" value="NM_001290228.1"/>
</dbReference>
<dbReference type="RefSeq" id="NP_001284580.1">
    <molecule id="O15021-2"/>
    <property type="nucleotide sequence ID" value="NM_001297651.2"/>
</dbReference>
<dbReference type="RefSeq" id="NP_055998.1">
    <molecule id="O15021-3"/>
    <property type="nucleotide sequence ID" value="NM_015183.3"/>
</dbReference>
<dbReference type="RefSeq" id="NP_942123.1">
    <molecule id="O15021-4"/>
    <property type="nucleotide sequence ID" value="NM_198828.3"/>
</dbReference>
<dbReference type="RefSeq" id="XP_006714669.1">
    <molecule id="O15021-2"/>
    <property type="nucleotide sequence ID" value="XM_006714606.4"/>
</dbReference>
<dbReference type="PDB" id="2W7R">
    <property type="method" value="X-ray"/>
    <property type="resolution" value="1.60 A"/>
    <property type="chains" value="A/B=1140-1231"/>
</dbReference>
<dbReference type="PDBsum" id="2W7R"/>
<dbReference type="SMR" id="O15021"/>
<dbReference type="BioGRID" id="131980">
    <property type="interactions" value="28"/>
</dbReference>
<dbReference type="FunCoup" id="O15021">
    <property type="interactions" value="815"/>
</dbReference>
<dbReference type="IntAct" id="O15021">
    <property type="interactions" value="14"/>
</dbReference>
<dbReference type="MINT" id="O15021"/>
<dbReference type="STRING" id="9606.ENSP00000385727"/>
<dbReference type="ChEMBL" id="CHEMBL2417351"/>
<dbReference type="GlyGen" id="O15021">
    <property type="glycosylation" value="8 sites, 1 N-linked glycan (1 site), 1 O-linked glycan (1 site)"/>
</dbReference>
<dbReference type="iPTMnet" id="O15021"/>
<dbReference type="MetOSite" id="O15021"/>
<dbReference type="PhosphoSitePlus" id="O15021"/>
<dbReference type="BioMuta" id="MAST4"/>
<dbReference type="jPOST" id="O15021"/>
<dbReference type="MassIVE" id="O15021"/>
<dbReference type="PaxDb" id="9606-ENSP00000385727"/>
<dbReference type="PeptideAtlas" id="O15021"/>
<dbReference type="ProteomicsDB" id="18893"/>
<dbReference type="ProteomicsDB" id="48378">
    <molecule id="O15021-5"/>
</dbReference>
<dbReference type="ProteomicsDB" id="48380">
    <molecule id="O15021-2"/>
</dbReference>
<dbReference type="ProteomicsDB" id="48381">
    <molecule id="O15021-3"/>
</dbReference>
<dbReference type="ProteomicsDB" id="48382">
    <molecule id="O15021-4"/>
</dbReference>
<dbReference type="Pumba" id="O15021"/>
<dbReference type="Antibodypedia" id="627">
    <property type="antibodies" value="101 antibodies from 23 providers"/>
</dbReference>
<dbReference type="DNASU" id="375449"/>
<dbReference type="Ensembl" id="ENST00000261569.11">
    <molecule id="O15021-2"/>
    <property type="protein sequence ID" value="ENSP00000261569.7"/>
    <property type="gene ID" value="ENSG00000069020.19"/>
</dbReference>
<dbReference type="Ensembl" id="ENST00000403625.7">
    <molecule id="O15021-5"/>
    <property type="protein sequence ID" value="ENSP00000385727.1"/>
    <property type="gene ID" value="ENSG00000069020.19"/>
</dbReference>
<dbReference type="Ensembl" id="ENST00000403666.5">
    <molecule id="O15021-3"/>
    <property type="protein sequence ID" value="ENSP00000384313.1"/>
    <property type="gene ID" value="ENSG00000069020.19"/>
</dbReference>
<dbReference type="Ensembl" id="ENST00000405643.5">
    <molecule id="O15021-6"/>
    <property type="protein sequence ID" value="ENSP00000384099.1"/>
    <property type="gene ID" value="ENSG00000069020.19"/>
</dbReference>
<dbReference type="Ensembl" id="ENST00000406374.5">
    <molecule id="O15021-4"/>
    <property type="protein sequence ID" value="ENSP00000385088.1"/>
    <property type="gene ID" value="ENSG00000069020.19"/>
</dbReference>
<dbReference type="GeneID" id="375449"/>
<dbReference type="KEGG" id="hsa:375449"/>
<dbReference type="MANE-Select" id="ENST00000403625.7">
    <property type="protein sequence ID" value="ENSP00000385727.1"/>
    <property type="RefSeq nucleotide sequence ID" value="NM_001164664.2"/>
    <property type="RefSeq protein sequence ID" value="NP_001158136.1"/>
</dbReference>
<dbReference type="UCSC" id="uc003jur.5">
    <molecule id="O15021-5"/>
    <property type="organism name" value="human"/>
</dbReference>
<dbReference type="AGR" id="HGNC:19037"/>
<dbReference type="CTD" id="375449"/>
<dbReference type="DisGeNET" id="375449"/>
<dbReference type="GeneCards" id="MAST4"/>
<dbReference type="HGNC" id="HGNC:19037">
    <property type="gene designation" value="MAST4"/>
</dbReference>
<dbReference type="HPA" id="ENSG00000069020">
    <property type="expression patterns" value="Low tissue specificity"/>
</dbReference>
<dbReference type="MalaCards" id="MAST4"/>
<dbReference type="MIM" id="618002">
    <property type="type" value="gene"/>
</dbReference>
<dbReference type="neXtProt" id="NX_O15021"/>
<dbReference type="OpenTargets" id="ENSG00000069020"/>
<dbReference type="PharmGKB" id="PA134920494"/>
<dbReference type="VEuPathDB" id="HostDB:ENSG00000069020"/>
<dbReference type="eggNOG" id="KOG0606">
    <property type="taxonomic scope" value="Eukaryota"/>
</dbReference>
<dbReference type="GeneTree" id="ENSGT00940000156399"/>
<dbReference type="InParanoid" id="O15021"/>
<dbReference type="OMA" id="LERLGTX"/>
<dbReference type="OrthoDB" id="10070999at2759"/>
<dbReference type="PAN-GO" id="O15021">
    <property type="GO annotations" value="4 GO annotations based on evolutionary models"/>
</dbReference>
<dbReference type="PhylomeDB" id="O15021"/>
<dbReference type="TreeFam" id="TF313149"/>
<dbReference type="PathwayCommons" id="O15021"/>
<dbReference type="SignaLink" id="O15021"/>
<dbReference type="BioGRID-ORCS" id="375449">
    <property type="hits" value="20 hits in 1180 CRISPR screens"/>
</dbReference>
<dbReference type="ChiTaRS" id="MAST4">
    <property type="organism name" value="human"/>
</dbReference>
<dbReference type="EvolutionaryTrace" id="O15021"/>
<dbReference type="GenomeRNAi" id="375449"/>
<dbReference type="Pharos" id="O15021">
    <property type="development level" value="Tbio"/>
</dbReference>
<dbReference type="PRO" id="PR:O15021"/>
<dbReference type="Proteomes" id="UP000005640">
    <property type="component" value="Chromosome 5"/>
</dbReference>
<dbReference type="RNAct" id="O15021">
    <property type="molecule type" value="protein"/>
</dbReference>
<dbReference type="Bgee" id="ENSG00000069020">
    <property type="expression patterns" value="Expressed in cervix squamous epithelium and 213 other cell types or tissues"/>
</dbReference>
<dbReference type="ExpressionAtlas" id="O15021">
    <property type="expression patterns" value="baseline and differential"/>
</dbReference>
<dbReference type="GO" id="GO:0005737">
    <property type="term" value="C:cytoplasm"/>
    <property type="evidence" value="ECO:0007669"/>
    <property type="project" value="UniProtKB-SubCell"/>
</dbReference>
<dbReference type="GO" id="GO:0005524">
    <property type="term" value="F:ATP binding"/>
    <property type="evidence" value="ECO:0007669"/>
    <property type="project" value="UniProtKB-KW"/>
</dbReference>
<dbReference type="GO" id="GO:0000287">
    <property type="term" value="F:magnesium ion binding"/>
    <property type="evidence" value="ECO:0007669"/>
    <property type="project" value="InterPro"/>
</dbReference>
<dbReference type="GO" id="GO:0106310">
    <property type="term" value="F:protein serine kinase activity"/>
    <property type="evidence" value="ECO:0007669"/>
    <property type="project" value="RHEA"/>
</dbReference>
<dbReference type="GO" id="GO:0004674">
    <property type="term" value="F:protein serine/threonine kinase activity"/>
    <property type="evidence" value="ECO:0000318"/>
    <property type="project" value="GO_Central"/>
</dbReference>
<dbReference type="GO" id="GO:0007010">
    <property type="term" value="P:cytoskeleton organization"/>
    <property type="evidence" value="ECO:0000318"/>
    <property type="project" value="GO_Central"/>
</dbReference>
<dbReference type="GO" id="GO:0035556">
    <property type="term" value="P:intracellular signal transduction"/>
    <property type="evidence" value="ECO:0000318"/>
    <property type="project" value="GO_Central"/>
</dbReference>
<dbReference type="CDD" id="cd23076">
    <property type="entry name" value="PDZ_MAST4"/>
    <property type="match status" value="1"/>
</dbReference>
<dbReference type="CDD" id="cd05609">
    <property type="entry name" value="STKc_MAST"/>
    <property type="match status" value="1"/>
</dbReference>
<dbReference type="FunFam" id="3.30.200.20:FF:001045">
    <property type="entry name" value="Microtubule-associated serine/threonine kinase 1a"/>
    <property type="match status" value="1"/>
</dbReference>
<dbReference type="FunFam" id="1.10.510.10:FF:000012">
    <property type="entry name" value="microtubule-associated serine/threonine-protein kinase 2 isoform X1"/>
    <property type="match status" value="1"/>
</dbReference>
<dbReference type="FunFam" id="1.20.1480.20:FF:000001">
    <property type="entry name" value="microtubule-associated serine/threonine-protein kinase 4 isoform X1"/>
    <property type="match status" value="1"/>
</dbReference>
<dbReference type="FunFam" id="2.30.42.10:FF:000008">
    <property type="entry name" value="microtubule-associated serine/threonine-protein kinase 4 isoform X2"/>
    <property type="match status" value="1"/>
</dbReference>
<dbReference type="Gene3D" id="2.30.42.10">
    <property type="match status" value="1"/>
</dbReference>
<dbReference type="Gene3D" id="1.20.1480.20">
    <property type="entry name" value="MAST3 pre-PK domain-like"/>
    <property type="match status" value="1"/>
</dbReference>
<dbReference type="Gene3D" id="3.30.200.20">
    <property type="entry name" value="Phosphorylase Kinase, domain 1"/>
    <property type="match status" value="1"/>
</dbReference>
<dbReference type="Gene3D" id="1.10.510.10">
    <property type="entry name" value="Transferase(Phosphotransferase) domain 1"/>
    <property type="match status" value="1"/>
</dbReference>
<dbReference type="InterPro" id="IPR000961">
    <property type="entry name" value="AGC-kinase_C"/>
</dbReference>
<dbReference type="InterPro" id="IPR011009">
    <property type="entry name" value="Kinase-like_dom_sf"/>
</dbReference>
<dbReference type="InterPro" id="IPR037711">
    <property type="entry name" value="MAST"/>
</dbReference>
<dbReference type="InterPro" id="IPR015022">
    <property type="entry name" value="MAST_pre-PK_dom"/>
</dbReference>
<dbReference type="InterPro" id="IPR023142">
    <property type="entry name" value="MAST_pre-PK_dom_sf"/>
</dbReference>
<dbReference type="InterPro" id="IPR001478">
    <property type="entry name" value="PDZ"/>
</dbReference>
<dbReference type="InterPro" id="IPR041489">
    <property type="entry name" value="PDZ_6"/>
</dbReference>
<dbReference type="InterPro" id="IPR036034">
    <property type="entry name" value="PDZ_sf"/>
</dbReference>
<dbReference type="InterPro" id="IPR000719">
    <property type="entry name" value="Prot_kinase_dom"/>
</dbReference>
<dbReference type="InterPro" id="IPR008271">
    <property type="entry name" value="Ser/Thr_kinase_AS"/>
</dbReference>
<dbReference type="InterPro" id="IPR050236">
    <property type="entry name" value="Ser_Thr_kinase_AGC"/>
</dbReference>
<dbReference type="PANTHER" id="PTHR24356:SF224">
    <property type="entry name" value="MICROTUBULE-ASSOCIATED SERINE_THREONINE-PROTEIN KINASE 4"/>
    <property type="match status" value="1"/>
</dbReference>
<dbReference type="PANTHER" id="PTHR24356">
    <property type="entry name" value="SERINE/THREONINE-PROTEIN KINASE"/>
    <property type="match status" value="1"/>
</dbReference>
<dbReference type="Pfam" id="PF08926">
    <property type="entry name" value="DUF1908"/>
    <property type="match status" value="1"/>
</dbReference>
<dbReference type="Pfam" id="PF17820">
    <property type="entry name" value="PDZ_6"/>
    <property type="match status" value="1"/>
</dbReference>
<dbReference type="Pfam" id="PF00069">
    <property type="entry name" value="Pkinase"/>
    <property type="match status" value="1"/>
</dbReference>
<dbReference type="SMART" id="SM00228">
    <property type="entry name" value="PDZ"/>
    <property type="match status" value="1"/>
</dbReference>
<dbReference type="SMART" id="SM00220">
    <property type="entry name" value="S_TKc"/>
    <property type="match status" value="1"/>
</dbReference>
<dbReference type="SUPFAM" id="SSF140482">
    <property type="entry name" value="MAST3 pre-PK domain-like"/>
    <property type="match status" value="1"/>
</dbReference>
<dbReference type="SUPFAM" id="SSF50156">
    <property type="entry name" value="PDZ domain-like"/>
    <property type="match status" value="1"/>
</dbReference>
<dbReference type="SUPFAM" id="SSF56112">
    <property type="entry name" value="Protein kinase-like (PK-like)"/>
    <property type="match status" value="1"/>
</dbReference>
<dbReference type="PROSITE" id="PS51285">
    <property type="entry name" value="AGC_KINASE_CTER"/>
    <property type="match status" value="1"/>
</dbReference>
<dbReference type="PROSITE" id="PS50106">
    <property type="entry name" value="PDZ"/>
    <property type="match status" value="1"/>
</dbReference>
<dbReference type="PROSITE" id="PS50011">
    <property type="entry name" value="PROTEIN_KINASE_DOM"/>
    <property type="match status" value="1"/>
</dbReference>
<dbReference type="PROSITE" id="PS00108">
    <property type="entry name" value="PROTEIN_KINASE_ST"/>
    <property type="match status" value="1"/>
</dbReference>
<accession>O15021</accession>
<accession>A6NL49</accession>
<accession>B5ME48</accession>
<accession>E7EWQ5</accession>
<accession>J3QT34</accession>
<accession>Q05EE6</accession>
<accession>Q6ZN07</accession>
<accession>Q8N4X4</accession>
<accession>Q96LY3</accession>
<comment type="catalytic activity">
    <reaction>
        <text>L-seryl-[protein] + ATP = O-phospho-L-seryl-[protein] + ADP + H(+)</text>
        <dbReference type="Rhea" id="RHEA:17989"/>
        <dbReference type="Rhea" id="RHEA-COMP:9863"/>
        <dbReference type="Rhea" id="RHEA-COMP:11604"/>
        <dbReference type="ChEBI" id="CHEBI:15378"/>
        <dbReference type="ChEBI" id="CHEBI:29999"/>
        <dbReference type="ChEBI" id="CHEBI:30616"/>
        <dbReference type="ChEBI" id="CHEBI:83421"/>
        <dbReference type="ChEBI" id="CHEBI:456216"/>
        <dbReference type="EC" id="2.7.11.1"/>
    </reaction>
</comment>
<comment type="catalytic activity">
    <reaction>
        <text>L-threonyl-[protein] + ATP = O-phospho-L-threonyl-[protein] + ADP + H(+)</text>
        <dbReference type="Rhea" id="RHEA:46608"/>
        <dbReference type="Rhea" id="RHEA-COMP:11060"/>
        <dbReference type="Rhea" id="RHEA-COMP:11605"/>
        <dbReference type="ChEBI" id="CHEBI:15378"/>
        <dbReference type="ChEBI" id="CHEBI:30013"/>
        <dbReference type="ChEBI" id="CHEBI:30616"/>
        <dbReference type="ChEBI" id="CHEBI:61977"/>
        <dbReference type="ChEBI" id="CHEBI:456216"/>
        <dbReference type="EC" id="2.7.11.1"/>
    </reaction>
</comment>
<comment type="cofactor">
    <cofactor evidence="1">
        <name>Mg(2+)</name>
        <dbReference type="ChEBI" id="CHEBI:18420"/>
    </cofactor>
</comment>
<comment type="subcellular location">
    <subcellularLocation>
        <location evidence="13">Cytoplasm</location>
    </subcellularLocation>
</comment>
<comment type="alternative products">
    <event type="alternative splicing"/>
    <isoform>
        <id>O15021-5</id>
        <name>1</name>
        <sequence type="displayed"/>
    </isoform>
    <isoform>
        <id>O15021-2</id>
        <name>2</name>
        <sequence type="described" ref="VSP_020888"/>
    </isoform>
    <isoform>
        <id>O15021-4</id>
        <name>4</name>
        <sequence type="described" ref="VSP_035852 VSP_035853"/>
    </isoform>
    <isoform>
        <id>O15021-3</id>
        <name>3</name>
        <sequence type="described" ref="VSP_023109"/>
    </isoform>
    <isoform>
        <id>O15021-6</id>
        <name>5</name>
        <sequence type="described" ref="VSP_059373 VSP_059374"/>
    </isoform>
</comment>
<comment type="tissue specificity">
    <text evidence="7">Highly expressed in most normal human tissues, with an exception of in testis, small intestine, colon and peripheral blood leukocyte.</text>
</comment>
<comment type="similarity">
    <text evidence="13">Belongs to the protein kinase superfamily. AGC Ser/Thr protein kinase family.</text>
</comment>
<comment type="sequence caution" evidence="13">
    <conflict type="frameshift">
        <sequence resource="EMBL" id="AK131421"/>
    </conflict>
</comment>
<feature type="chain" id="PRO_0000252256" description="Microtubule-associated serine/threonine-protein kinase 4">
    <location>
        <begin position="1"/>
        <end position="2623"/>
    </location>
</feature>
<feature type="domain" description="Protein kinase" evidence="4">
    <location>
        <begin position="570"/>
        <end position="843"/>
    </location>
</feature>
<feature type="domain" description="AGC-kinase C-terminal" evidence="5">
    <location>
        <begin position="844"/>
        <end position="916"/>
    </location>
</feature>
<feature type="domain" description="PDZ" evidence="3">
    <location>
        <begin position="1141"/>
        <end position="1229"/>
    </location>
</feature>
<feature type="region of interest" description="Disordered" evidence="6">
    <location>
        <begin position="1"/>
        <end position="76"/>
    </location>
</feature>
<feature type="region of interest" description="Disordered" evidence="6">
    <location>
        <begin position="93"/>
        <end position="165"/>
    </location>
</feature>
<feature type="region of interest" description="Disordered" evidence="6">
    <location>
        <begin position="227"/>
        <end position="269"/>
    </location>
</feature>
<feature type="region of interest" description="Disordered" evidence="6">
    <location>
        <begin position="289"/>
        <end position="312"/>
    </location>
</feature>
<feature type="region of interest" description="Disordered" evidence="6">
    <location>
        <begin position="536"/>
        <end position="560"/>
    </location>
</feature>
<feature type="region of interest" description="Disordered" evidence="6">
    <location>
        <begin position="921"/>
        <end position="1082"/>
    </location>
</feature>
<feature type="region of interest" description="Disordered" evidence="6">
    <location>
        <begin position="1107"/>
        <end position="1143"/>
    </location>
</feature>
<feature type="region of interest" description="Disordered" evidence="6">
    <location>
        <begin position="1227"/>
        <end position="1262"/>
    </location>
</feature>
<feature type="region of interest" description="Disordered" evidence="6">
    <location>
        <begin position="1289"/>
        <end position="1527"/>
    </location>
</feature>
<feature type="region of interest" description="Disordered" evidence="6">
    <location>
        <begin position="1540"/>
        <end position="1561"/>
    </location>
</feature>
<feature type="region of interest" description="Disordered" evidence="6">
    <location>
        <begin position="1609"/>
        <end position="1671"/>
    </location>
</feature>
<feature type="region of interest" description="Disordered" evidence="6">
    <location>
        <begin position="1714"/>
        <end position="1741"/>
    </location>
</feature>
<feature type="region of interest" description="Disordered" evidence="6">
    <location>
        <begin position="1764"/>
        <end position="1795"/>
    </location>
</feature>
<feature type="region of interest" description="Disordered" evidence="6">
    <location>
        <begin position="1809"/>
        <end position="1864"/>
    </location>
</feature>
<feature type="region of interest" description="Disordered" evidence="6">
    <location>
        <begin position="1876"/>
        <end position="2386"/>
    </location>
</feature>
<feature type="region of interest" description="Disordered" evidence="6">
    <location>
        <begin position="2398"/>
        <end position="2623"/>
    </location>
</feature>
<feature type="compositionally biased region" description="Low complexity" evidence="6">
    <location>
        <begin position="23"/>
        <end position="47"/>
    </location>
</feature>
<feature type="compositionally biased region" description="Pro residues" evidence="6">
    <location>
        <begin position="95"/>
        <end position="108"/>
    </location>
</feature>
<feature type="compositionally biased region" description="Polar residues" evidence="6">
    <location>
        <begin position="227"/>
        <end position="240"/>
    </location>
</feature>
<feature type="compositionally biased region" description="Polar residues" evidence="6">
    <location>
        <begin position="254"/>
        <end position="264"/>
    </location>
</feature>
<feature type="compositionally biased region" description="Polar residues" evidence="6">
    <location>
        <begin position="289"/>
        <end position="299"/>
    </location>
</feature>
<feature type="compositionally biased region" description="Low complexity" evidence="6">
    <location>
        <begin position="300"/>
        <end position="309"/>
    </location>
</feature>
<feature type="compositionally biased region" description="Polar residues" evidence="6">
    <location>
        <begin position="539"/>
        <end position="558"/>
    </location>
</feature>
<feature type="compositionally biased region" description="Polar residues" evidence="6">
    <location>
        <begin position="935"/>
        <end position="964"/>
    </location>
</feature>
<feature type="compositionally biased region" description="Low complexity" evidence="6">
    <location>
        <begin position="1019"/>
        <end position="1036"/>
    </location>
</feature>
<feature type="compositionally biased region" description="Polar residues" evidence="6">
    <location>
        <begin position="1049"/>
        <end position="1062"/>
    </location>
</feature>
<feature type="compositionally biased region" description="Basic and acidic residues" evidence="6">
    <location>
        <begin position="1069"/>
        <end position="1078"/>
    </location>
</feature>
<feature type="compositionally biased region" description="Low complexity" evidence="6">
    <location>
        <begin position="1107"/>
        <end position="1139"/>
    </location>
</feature>
<feature type="compositionally biased region" description="Basic residues" evidence="6">
    <location>
        <begin position="1241"/>
        <end position="1256"/>
    </location>
</feature>
<feature type="compositionally biased region" description="Low complexity" evidence="6">
    <location>
        <begin position="1290"/>
        <end position="1343"/>
    </location>
</feature>
<feature type="compositionally biased region" description="Basic and acidic residues" evidence="6">
    <location>
        <begin position="1444"/>
        <end position="1460"/>
    </location>
</feature>
<feature type="compositionally biased region" description="Basic and acidic residues" evidence="6">
    <location>
        <begin position="1540"/>
        <end position="1552"/>
    </location>
</feature>
<feature type="compositionally biased region" description="Basic and acidic residues" evidence="6">
    <location>
        <begin position="1625"/>
        <end position="1638"/>
    </location>
</feature>
<feature type="compositionally biased region" description="Basic and acidic residues" evidence="6">
    <location>
        <begin position="1662"/>
        <end position="1671"/>
    </location>
</feature>
<feature type="compositionally biased region" description="Basic and acidic residues" evidence="6">
    <location>
        <begin position="1780"/>
        <end position="1792"/>
    </location>
</feature>
<feature type="compositionally biased region" description="Low complexity" evidence="6">
    <location>
        <begin position="1821"/>
        <end position="1832"/>
    </location>
</feature>
<feature type="compositionally biased region" description="Polar residues" evidence="6">
    <location>
        <begin position="1844"/>
        <end position="1864"/>
    </location>
</feature>
<feature type="compositionally biased region" description="Polar residues" evidence="6">
    <location>
        <begin position="1914"/>
        <end position="1923"/>
    </location>
</feature>
<feature type="compositionally biased region" description="Basic and acidic residues" evidence="6">
    <location>
        <begin position="1924"/>
        <end position="1934"/>
    </location>
</feature>
<feature type="compositionally biased region" description="Basic and acidic residues" evidence="6">
    <location>
        <begin position="1963"/>
        <end position="1975"/>
    </location>
</feature>
<feature type="compositionally biased region" description="Basic and acidic residues" evidence="6">
    <location>
        <begin position="1982"/>
        <end position="1997"/>
    </location>
</feature>
<feature type="compositionally biased region" description="Polar residues" evidence="6">
    <location>
        <begin position="2006"/>
        <end position="2015"/>
    </location>
</feature>
<feature type="compositionally biased region" description="Basic and acidic residues" evidence="6">
    <location>
        <begin position="2043"/>
        <end position="2055"/>
    </location>
</feature>
<feature type="compositionally biased region" description="Basic and acidic residues" evidence="6">
    <location>
        <begin position="2068"/>
        <end position="2083"/>
    </location>
</feature>
<feature type="compositionally biased region" description="Basic and acidic residues" evidence="6">
    <location>
        <begin position="2114"/>
        <end position="2126"/>
    </location>
</feature>
<feature type="compositionally biased region" description="Basic and acidic residues" evidence="6">
    <location>
        <begin position="2365"/>
        <end position="2375"/>
    </location>
</feature>
<feature type="compositionally biased region" description="Polar residues" evidence="6">
    <location>
        <begin position="2441"/>
        <end position="2451"/>
    </location>
</feature>
<feature type="compositionally biased region" description="Low complexity" evidence="6">
    <location>
        <begin position="2475"/>
        <end position="2488"/>
    </location>
</feature>
<feature type="compositionally biased region" description="Basic and acidic residues" evidence="6">
    <location>
        <begin position="2599"/>
        <end position="2614"/>
    </location>
</feature>
<feature type="active site" description="Proton acceptor" evidence="4">
    <location>
        <position position="693"/>
    </location>
</feature>
<feature type="binding site" evidence="4">
    <location>
        <begin position="576"/>
        <end position="584"/>
    </location>
    <ligand>
        <name>ATP</name>
        <dbReference type="ChEBI" id="CHEBI:30616"/>
    </ligand>
</feature>
<feature type="binding site" evidence="4">
    <location>
        <position position="599"/>
    </location>
    <ligand>
        <name>ATP</name>
        <dbReference type="ChEBI" id="CHEBI:30616"/>
    </ligand>
</feature>
<feature type="modified residue" description="Phosphoserine" evidence="2">
    <location>
        <position position="206"/>
    </location>
</feature>
<feature type="modified residue" description="Phosphoserine" evidence="2">
    <location>
        <position position="213"/>
    </location>
</feature>
<feature type="modified residue" description="Phosphoserine" evidence="15">
    <location>
        <position position="270"/>
    </location>
</feature>
<feature type="modified residue" description="Phosphoserine" evidence="15">
    <location>
        <position position="914"/>
    </location>
</feature>
<feature type="modified residue" description="Phosphoserine" evidence="2">
    <location>
        <position position="1292"/>
    </location>
</feature>
<feature type="modified residue" description="Phosphoserine" evidence="15 16">
    <location>
        <position position="1370"/>
    </location>
</feature>
<feature type="modified residue" description="Phosphoserine" evidence="15">
    <location>
        <position position="1384"/>
    </location>
</feature>
<feature type="modified residue" description="Phosphoserine" evidence="2">
    <location>
        <position position="1397"/>
    </location>
</feature>
<feature type="modified residue" description="Phosphoserine" evidence="15">
    <location>
        <position position="1419"/>
    </location>
</feature>
<feature type="modified residue" description="Phosphoserine" evidence="15">
    <location>
        <position position="1467"/>
    </location>
</feature>
<feature type="modified residue" description="Phosphoserine" evidence="15">
    <location>
        <position position="1523"/>
    </location>
</feature>
<feature type="modified residue" description="Phosphoserine" evidence="15 16">
    <location>
        <position position="1779"/>
    </location>
</feature>
<feature type="modified residue" description="Phosphoserine" evidence="15">
    <location>
        <position position="1822"/>
    </location>
</feature>
<feature type="modified residue" description="Phosphoserine" evidence="15">
    <location>
        <position position="1909"/>
    </location>
</feature>
<feature type="modified residue" description="Phosphoserine" evidence="15">
    <location>
        <position position="2442"/>
    </location>
</feature>
<feature type="modified residue" description="Phosphoserine" evidence="15 16">
    <location>
        <position position="2520"/>
    </location>
</feature>
<feature type="modified residue" description="Phosphoserine" evidence="15">
    <location>
        <position position="2552"/>
    </location>
</feature>
<feature type="splice variant" id="VSP_020888" description="In isoform 2." evidence="9">
    <original>MGEKVSEAPEPVPRGCSGHGSRTPASALVAASSPGASSAESSSGSETLSEEGEPGGFSREHQPPPPPPLGGTLGARAPAAWAPASVLLERGVLALPPPLPGGAVPPAPRGSSASQEEQDEELDHILSPPPMPFRKCSNPDVASGPGKSLKYKRQLSEDGRQLRRGSLGGALTGRYLLPNPVAGQAWPASAETSNLVRMRSQALGQSAPSLTASLKELSLPRRGSF</original>
    <variation>MDMSDPNFWTVLSNFTLPHLRSGNRLRRTQS</variation>
    <location>
        <begin position="1"/>
        <end position="225"/>
    </location>
</feature>
<feature type="splice variant" id="VSP_023109" description="In isoform 3." evidence="11">
    <original>MGEKVSEAPEPVPRGCSGHGSRTPASALVAASSPGASSAESSSGSETLSEEGEPGGFSREHQPPPPPPLGGTLGARAPAAWAPASVLLERGVLALPPPLPGGAVPPAPRGSSASQEEQDEELDHILSPPPMPFRKCSNPDVASGPGKSLKYKRQLSEDGRQLRRGSLGGALTGRYLLPNPVAGQAWPASAETSNLVRMRSQALGQSAPSLTASLKELSLPRRGSF</original>
    <variation>MDESSILRRRGLQKELSLPRRGSLIDSQKWNCLVKR</variation>
    <location>
        <begin position="1"/>
        <end position="225"/>
    </location>
</feature>
<feature type="splice variant" id="VSP_059373" description="In isoform 5." evidence="9">
    <original>MGEKVSEAPEPVPRGCSGHGSRTPASALVAASSPGASSAESSSGSETLSEEGEPGGFSREHQPPPPPPLGGTLGARAPAAWAPASVLLERGVLALPPPLPGGAVPPAPRGSSASQEEQDEELDHILSPPPMPFRKCSNPDVASGPGKSLKYKRQLSEDGRQLRRGSLGGALTGRYLLPNPVAGQAWPASAETSNLVRMRSQALGQSAPSLTASLKELSLPRRGSF</original>
    <variation>MKAQRERLQIPGLTLDLTPRSLSPTPSSPGSPCSPLLAFHFWS</variation>
    <location>
        <begin position="1"/>
        <end position="225"/>
    </location>
</feature>
<feature type="splice variant" id="VSP_035852" description="In isoform 4." evidence="10">
    <original>FCRTSNRKSLIGNGQSPALPRPHSPL</original>
    <variation>LIDSQKWNCLVKRPVCPNAGRTSPLG</variation>
    <location>
        <begin position="225"/>
        <end position="250"/>
    </location>
</feature>
<feature type="splice variant" id="VSP_035853" description="In isoform 4." evidence="10">
    <location>
        <begin position="251"/>
        <end position="2623"/>
    </location>
</feature>
<feature type="splice variant" id="VSP_059374" description="In isoform 5." evidence="9">
    <original>R</original>
    <variation>RRND</variation>
    <location>
        <position position="277"/>
    </location>
</feature>
<feature type="sequence variant" id="VAR_059768" description="In dbSNP:rs6867856.">
    <original>A</original>
    <variation>P</variation>
    <location>
        <position position="77"/>
    </location>
</feature>
<feature type="sequence variant" id="VAR_040787" evidence="8">
    <original>Q</original>
    <variation>R</variation>
    <location>
        <position position="920"/>
    </location>
</feature>
<feature type="sequence variant" id="VAR_040788" evidence="8">
    <original>R</original>
    <variation>W</variation>
    <location>
        <position position="1954"/>
    </location>
</feature>
<feature type="sequence variant" id="VAR_040789" description="In dbSNP:rs752429440." evidence="8">
    <original>P</original>
    <variation>L</variation>
    <location>
        <position position="2198"/>
    </location>
</feature>
<feature type="sequence variant" id="VAR_040790" evidence="8">
    <original>S</original>
    <variation>C</variation>
    <location>
        <position position="2290"/>
    </location>
</feature>
<feature type="sequence variant" id="VAR_040791" description="In a lung squamous cell carcinoma sample; somatic mutation." evidence="8">
    <original>E</original>
    <variation>D</variation>
    <location>
        <position position="2467"/>
    </location>
</feature>
<feature type="sequence conflict" description="In Ref. 4; AK131421." evidence="13" ref="4">
    <original>R</original>
    <variation>H</variation>
    <location>
        <position position="350"/>
    </location>
</feature>
<feature type="sequence conflict" description="In Ref. 4; AK131421." evidence="13" ref="4">
    <original>M</original>
    <variation>T</variation>
    <location>
        <position position="662"/>
    </location>
</feature>
<feature type="sequence conflict" description="In Ref. 4; BAB71532." evidence="13" ref="4">
    <original>FAETV</original>
    <variation>YIVKL</variation>
    <location>
        <begin position="674"/>
        <end position="678"/>
    </location>
</feature>
<feature type="sequence conflict" description="In Ref. 1; AAW52510 and 5; BAA20762." evidence="13" ref="1 5">
    <original>R</original>
    <variation>P</variation>
    <location>
        <position position="1624"/>
    </location>
</feature>
<feature type="sequence conflict" description="In Ref. 1; AAW52510 and 5; BAA20762." evidence="13" ref="1 5">
    <original>K</original>
    <variation>E</variation>
    <location>
        <position position="1799"/>
    </location>
</feature>
<feature type="strand" evidence="17">
    <location>
        <begin position="1142"/>
        <end position="1145"/>
    </location>
</feature>
<feature type="strand" evidence="17">
    <location>
        <begin position="1153"/>
        <end position="1161"/>
    </location>
</feature>
<feature type="strand" evidence="17">
    <location>
        <begin position="1168"/>
        <end position="1177"/>
    </location>
</feature>
<feature type="helix" evidence="17">
    <location>
        <begin position="1182"/>
        <end position="1186"/>
    </location>
</feature>
<feature type="strand" evidence="17">
    <location>
        <begin position="1193"/>
        <end position="1197"/>
    </location>
</feature>
<feature type="helix" evidence="17">
    <location>
        <begin position="1207"/>
        <end position="1215"/>
    </location>
</feature>
<feature type="turn" evidence="17">
    <location>
        <begin position="1216"/>
        <end position="1219"/>
    </location>
</feature>
<feature type="strand" evidence="17">
    <location>
        <begin position="1220"/>
        <end position="1226"/>
    </location>
</feature>